<dbReference type="EMBL" id="CP000479">
    <property type="protein sequence ID" value="ABK69475.1"/>
    <property type="molecule type" value="Genomic_DNA"/>
</dbReference>
<dbReference type="RefSeq" id="WP_003873219.1">
    <property type="nucleotide sequence ID" value="NC_008595.1"/>
</dbReference>
<dbReference type="SMR" id="A0QCX9"/>
<dbReference type="KEGG" id="mav:MAV_1528"/>
<dbReference type="HOGENOM" id="CLU_084338_4_0_11"/>
<dbReference type="Proteomes" id="UP000001574">
    <property type="component" value="Chromosome"/>
</dbReference>
<dbReference type="GO" id="GO:0005886">
    <property type="term" value="C:plasma membrane"/>
    <property type="evidence" value="ECO:0007669"/>
    <property type="project" value="UniProtKB-SubCell"/>
</dbReference>
<dbReference type="GO" id="GO:0045259">
    <property type="term" value="C:proton-transporting ATP synthase complex"/>
    <property type="evidence" value="ECO:0007669"/>
    <property type="project" value="UniProtKB-KW"/>
</dbReference>
<dbReference type="GO" id="GO:0005524">
    <property type="term" value="F:ATP binding"/>
    <property type="evidence" value="ECO:0007669"/>
    <property type="project" value="UniProtKB-UniRule"/>
</dbReference>
<dbReference type="GO" id="GO:0046933">
    <property type="term" value="F:proton-transporting ATP synthase activity, rotational mechanism"/>
    <property type="evidence" value="ECO:0007669"/>
    <property type="project" value="UniProtKB-UniRule"/>
</dbReference>
<dbReference type="CDD" id="cd12152">
    <property type="entry name" value="F1-ATPase_delta"/>
    <property type="match status" value="1"/>
</dbReference>
<dbReference type="Gene3D" id="2.60.15.10">
    <property type="entry name" value="F0F1 ATP synthase delta/epsilon subunit, N-terminal"/>
    <property type="match status" value="1"/>
</dbReference>
<dbReference type="HAMAP" id="MF_00530">
    <property type="entry name" value="ATP_synth_epsil_bac"/>
    <property type="match status" value="1"/>
</dbReference>
<dbReference type="InterPro" id="IPR001469">
    <property type="entry name" value="ATP_synth_F1_dsu/esu"/>
</dbReference>
<dbReference type="InterPro" id="IPR020546">
    <property type="entry name" value="ATP_synth_F1_dsu/esu_N"/>
</dbReference>
<dbReference type="InterPro" id="IPR036771">
    <property type="entry name" value="ATPsynth_dsu/esu_N"/>
</dbReference>
<dbReference type="NCBIfam" id="TIGR01216">
    <property type="entry name" value="ATP_synt_epsi"/>
    <property type="match status" value="1"/>
</dbReference>
<dbReference type="NCBIfam" id="NF009977">
    <property type="entry name" value="PRK13442.1"/>
    <property type="match status" value="1"/>
</dbReference>
<dbReference type="PANTHER" id="PTHR13822">
    <property type="entry name" value="ATP SYNTHASE DELTA/EPSILON CHAIN"/>
    <property type="match status" value="1"/>
</dbReference>
<dbReference type="PANTHER" id="PTHR13822:SF10">
    <property type="entry name" value="ATP SYNTHASE EPSILON CHAIN, CHLOROPLASTIC"/>
    <property type="match status" value="1"/>
</dbReference>
<dbReference type="Pfam" id="PF02823">
    <property type="entry name" value="ATP-synt_DE_N"/>
    <property type="match status" value="1"/>
</dbReference>
<dbReference type="SUPFAM" id="SSF51344">
    <property type="entry name" value="Epsilon subunit of F1F0-ATP synthase N-terminal domain"/>
    <property type="match status" value="1"/>
</dbReference>
<sequence>MAELNVEIVAVDRKIWSGEATFLFTRTTVGEIGILPRHIPLVAQLVDDAMVRVEREGEDDLRIAVDGGFLSVTEETVTILAESAEFSSEIDESAAREAAESDDPRVAARGRARLRAVGAID</sequence>
<reference key="1">
    <citation type="submission" date="2006-10" db="EMBL/GenBank/DDBJ databases">
        <authorList>
            <person name="Fleischmann R.D."/>
            <person name="Dodson R.J."/>
            <person name="Haft D.H."/>
            <person name="Merkel J.S."/>
            <person name="Nelson W.C."/>
            <person name="Fraser C.M."/>
        </authorList>
    </citation>
    <scope>NUCLEOTIDE SEQUENCE [LARGE SCALE GENOMIC DNA]</scope>
    <source>
        <strain>104</strain>
    </source>
</reference>
<evidence type="ECO:0000255" key="1">
    <source>
        <dbReference type="HAMAP-Rule" id="MF_00530"/>
    </source>
</evidence>
<gene>
    <name evidence="1" type="primary">atpC</name>
    <name type="ordered locus">MAV_1528</name>
</gene>
<protein>
    <recommendedName>
        <fullName evidence="1">ATP synthase epsilon chain</fullName>
    </recommendedName>
    <alternativeName>
        <fullName evidence="1">ATP synthase F1 sector epsilon subunit</fullName>
    </alternativeName>
    <alternativeName>
        <fullName evidence="1">F-ATPase epsilon subunit</fullName>
    </alternativeName>
</protein>
<feature type="chain" id="PRO_1000056504" description="ATP synthase epsilon chain">
    <location>
        <begin position="1"/>
        <end position="121"/>
    </location>
</feature>
<comment type="function">
    <text evidence="1">Produces ATP from ADP in the presence of a proton gradient across the membrane.</text>
</comment>
<comment type="subunit">
    <text evidence="1">F-type ATPases have 2 components, CF(1) - the catalytic core - and CF(0) - the membrane proton channel. CF(1) has five subunits: alpha(3), beta(3), gamma(1), delta(1), epsilon(1). CF(0) has three main subunits: a, b and c.</text>
</comment>
<comment type="subcellular location">
    <subcellularLocation>
        <location evidence="1">Cell membrane</location>
        <topology evidence="1">Peripheral membrane protein</topology>
    </subcellularLocation>
</comment>
<comment type="similarity">
    <text evidence="1">Belongs to the ATPase epsilon chain family.</text>
</comment>
<proteinExistence type="inferred from homology"/>
<accession>A0QCX9</accession>
<organism>
    <name type="scientific">Mycobacterium avium (strain 104)</name>
    <dbReference type="NCBI Taxonomy" id="243243"/>
    <lineage>
        <taxon>Bacteria</taxon>
        <taxon>Bacillati</taxon>
        <taxon>Actinomycetota</taxon>
        <taxon>Actinomycetes</taxon>
        <taxon>Mycobacteriales</taxon>
        <taxon>Mycobacteriaceae</taxon>
        <taxon>Mycobacterium</taxon>
        <taxon>Mycobacterium avium complex (MAC)</taxon>
    </lineage>
</organism>
<name>ATPE_MYCA1</name>
<keyword id="KW-0066">ATP synthesis</keyword>
<keyword id="KW-1003">Cell membrane</keyword>
<keyword id="KW-0139">CF(1)</keyword>
<keyword id="KW-0375">Hydrogen ion transport</keyword>
<keyword id="KW-0406">Ion transport</keyword>
<keyword id="KW-0472">Membrane</keyword>
<keyword id="KW-0813">Transport</keyword>